<comment type="function">
    <text evidence="1">Major role in the synthesis of nucleoside triphosphates other than ATP. The ATP gamma phosphate is transferred to the NDP beta phosphate via a ping-pong mechanism, using a phosphorylated active-site intermediate. Possesses nucleoside-diphosphate kinase, serine/threonine-specific protein kinase, geranyl and farnesyl pyrophosphate kinase, histidine protein kinase and 3'-5' exonuclease activities. Involved in cell proliferation, differentiation and development, signal transduction, G protein-coupled receptor endocytosis, and gene expression. Required for neural development including neural patterning and cell fate determination. During GZMA-mediated cell death, works in concert with TREX1. NME1 nicks one strand of DNA and TREX1 removes bases from the free 3' end to enhance DNA damage and prevent DNA end reannealing and rapid repair (By similarity).</text>
</comment>
<comment type="catalytic activity">
    <reaction>
        <text>a 2'-deoxyribonucleoside 5'-diphosphate + ATP = a 2'-deoxyribonucleoside 5'-triphosphate + ADP</text>
        <dbReference type="Rhea" id="RHEA:44640"/>
        <dbReference type="ChEBI" id="CHEBI:30616"/>
        <dbReference type="ChEBI" id="CHEBI:61560"/>
        <dbReference type="ChEBI" id="CHEBI:73316"/>
        <dbReference type="ChEBI" id="CHEBI:456216"/>
        <dbReference type="EC" id="2.7.4.6"/>
    </reaction>
</comment>
<comment type="catalytic activity">
    <reaction>
        <text>a ribonucleoside 5'-diphosphate + ATP = a ribonucleoside 5'-triphosphate + ADP</text>
        <dbReference type="Rhea" id="RHEA:18113"/>
        <dbReference type="ChEBI" id="CHEBI:30616"/>
        <dbReference type="ChEBI" id="CHEBI:57930"/>
        <dbReference type="ChEBI" id="CHEBI:61557"/>
        <dbReference type="ChEBI" id="CHEBI:456216"/>
        <dbReference type="EC" id="2.7.4.6"/>
    </reaction>
</comment>
<comment type="cofactor">
    <cofactor evidence="1">
        <name>Mg(2+)</name>
        <dbReference type="ChEBI" id="CHEBI:18420"/>
    </cofactor>
</comment>
<comment type="activity regulation">
    <text evidence="1">Autophosphorylation at His-118 increases serine/threonine protein kinase activity of the enzyme. Interaction with the SET complex inhibits exonuclease activity (By similarity).</text>
</comment>
<comment type="subunit">
    <text evidence="2">Hexamer of two different chains: A and B (A6, A5B, A4B2, A3B3, A2B4, AB5, B6). Interacts with PRUNE1. Component of the SET complex, composed of at least ANP32A, APEX1, HMGB2, NME1, SET and TREX1. Within this complex, interacts directly with SET. Also interacts with TREX1, but only following translocation to the nucleus.</text>
</comment>
<comment type="subcellular location">
    <subcellularLocation>
        <location>Cytoplasm</location>
    </subcellularLocation>
    <subcellularLocation>
        <location>Nucleus</location>
    </subcellularLocation>
</comment>
<comment type="disease">
    <text>This protein is found in reduced amount in tumor cells of high metastatic potential.</text>
</comment>
<comment type="similarity">
    <text evidence="3">Belongs to the NDK family.</text>
</comment>
<comment type="sequence caution" evidence="3">
    <conflict type="erroneous initiation">
        <sequence resource="EMBL-CDS" id="AAA39826"/>
    </conflict>
    <text>Extended N-terminus.</text>
</comment>
<organism>
    <name type="scientific">Mus musculus</name>
    <name type="common">Mouse</name>
    <dbReference type="NCBI Taxonomy" id="10090"/>
    <lineage>
        <taxon>Eukaryota</taxon>
        <taxon>Metazoa</taxon>
        <taxon>Chordata</taxon>
        <taxon>Craniata</taxon>
        <taxon>Vertebrata</taxon>
        <taxon>Euteleostomi</taxon>
        <taxon>Mammalia</taxon>
        <taxon>Eutheria</taxon>
        <taxon>Euarchontoglires</taxon>
        <taxon>Glires</taxon>
        <taxon>Rodentia</taxon>
        <taxon>Myomorpha</taxon>
        <taxon>Muroidea</taxon>
        <taxon>Muridae</taxon>
        <taxon>Murinae</taxon>
        <taxon>Mus</taxon>
        <taxon>Mus</taxon>
    </lineage>
</organism>
<evidence type="ECO:0000250" key="1"/>
<evidence type="ECO:0000250" key="2">
    <source>
        <dbReference type="UniProtKB" id="P15531"/>
    </source>
</evidence>
<evidence type="ECO:0000305" key="3"/>
<evidence type="ECO:0007744" key="4">
    <source>
    </source>
</evidence>
<evidence type="ECO:0007829" key="5">
    <source>
        <dbReference type="PDB" id="7ZL8"/>
    </source>
</evidence>
<reference key="1">
    <citation type="journal article" date="1989" name="Nature">
        <title>Reduced Nm23/Awd protein in tumour metastasis and aberrant Drosophila development.</title>
        <authorList>
            <person name="Rosengard A.M."/>
            <person name="Krutzsch H.C."/>
            <person name="Shearn A."/>
            <person name="Biggs J.R."/>
            <person name="Barker E."/>
            <person name="Margulies I.M.K."/>
            <person name="King C.R."/>
            <person name="Liotta L.A."/>
            <person name="Steeg P.S."/>
        </authorList>
    </citation>
    <scope>NUCLEOTIDE SEQUENCE [MRNA]</scope>
</reference>
<reference key="2">
    <citation type="journal article" date="1988" name="J. Natl. Cancer Inst.">
        <title>Evidence for a novel gene associated with low tumor metastatic potential.</title>
        <authorList>
            <person name="Steeg P.S."/>
            <person name="Bevilacqua G."/>
            <person name="Kopper L."/>
            <person name="Thorgeirsson U.P."/>
            <person name="Talmadge J.E."/>
            <person name="Liotta L.A."/>
            <person name="Sobel M.E."/>
        </authorList>
    </citation>
    <scope>NUCLEOTIDE SEQUENCE [MRNA]</scope>
</reference>
<reference key="3">
    <citation type="journal article" date="1991" name="Cell">
        <title>Reduced tumor incidence, metastatic potential, and cytokine responsiveness of nm23-transfected melanoma cells.</title>
        <authorList>
            <person name="Leone A."/>
            <person name="Flatow U."/>
            <person name="King C.R."/>
            <person name="Sandeen M.A."/>
            <person name="Margulies I.M."/>
            <person name="Liotta L.A."/>
            <person name="Steeg P.S."/>
        </authorList>
    </citation>
    <scope>NUCLEOTIDE SEQUENCE [MRNA]</scope>
</reference>
<reference key="4">
    <citation type="submission" date="1997-02" db="EMBL/GenBank/DDBJ databases">
        <authorList>
            <person name="Dabernat S."/>
            <person name="Masse K."/>
            <person name="Daniel J.Y."/>
        </authorList>
    </citation>
    <scope>NUCLEOTIDE SEQUENCE [MRNA]</scope>
    <source>
        <strain>129/Sv</strain>
    </source>
</reference>
<reference key="5">
    <citation type="submission" date="1997-11" db="EMBL/GenBank/DDBJ databases">
        <authorList>
            <person name="Gervasi F."/>
            <person name="Fanciulli M."/>
            <person name="Lombardi D."/>
        </authorList>
    </citation>
    <scope>NUCLEOTIDE SEQUENCE [MRNA]</scope>
    <source>
        <strain>Swiss Webster / NIH</strain>
    </source>
</reference>
<reference key="6">
    <citation type="journal article" date="2004" name="Genome Res.">
        <title>The status, quality, and expansion of the NIH full-length cDNA project: the Mammalian Gene Collection (MGC).</title>
        <authorList>
            <consortium name="The MGC Project Team"/>
        </authorList>
    </citation>
    <scope>NUCLEOTIDE SEQUENCE [LARGE SCALE MRNA]</scope>
    <source>
        <strain>FVB/N</strain>
        <tissue>Mammary gland</tissue>
    </source>
</reference>
<reference key="7">
    <citation type="submission" date="2007-04" db="UniProtKB">
        <authorList>
            <person name="Lubec G."/>
            <person name="Klug S."/>
            <person name="Kang S.U."/>
        </authorList>
    </citation>
    <scope>PROTEIN SEQUENCE OF 7-26; 67-85; 89-124 AND 129-143</scope>
    <scope>IDENTIFICATION BY MASS SPECTROMETRY</scope>
    <source>
        <strain>C57BL/6J</strain>
        <tissue>Brain</tissue>
        <tissue>Hippocampus</tissue>
    </source>
</reference>
<reference key="8">
    <citation type="journal article" date="2010" name="Cell">
        <title>A tissue-specific atlas of mouse protein phosphorylation and expression.</title>
        <authorList>
            <person name="Huttlin E.L."/>
            <person name="Jedrychowski M.P."/>
            <person name="Elias J.E."/>
            <person name="Goswami T."/>
            <person name="Rad R."/>
            <person name="Beausoleil S.A."/>
            <person name="Villen J."/>
            <person name="Haas W."/>
            <person name="Sowa M.E."/>
            <person name="Gygi S.P."/>
        </authorList>
    </citation>
    <scope>IDENTIFICATION BY MASS SPECTROMETRY [LARGE SCALE ANALYSIS]</scope>
    <source>
        <tissue>Brain</tissue>
        <tissue>Brown adipose tissue</tissue>
        <tissue>Heart</tissue>
        <tissue>Kidney</tissue>
        <tissue>Liver</tissue>
        <tissue>Lung</tissue>
        <tissue>Pancreas</tissue>
        <tissue>Spleen</tissue>
        <tissue>Testis</tissue>
    </source>
</reference>
<reference key="9">
    <citation type="journal article" date="2013" name="Mol. Cell">
        <title>SIRT5-mediated lysine desuccinylation impacts diverse metabolic pathways.</title>
        <authorList>
            <person name="Park J."/>
            <person name="Chen Y."/>
            <person name="Tishkoff D.X."/>
            <person name="Peng C."/>
            <person name="Tan M."/>
            <person name="Dai L."/>
            <person name="Xie Z."/>
            <person name="Zhang Y."/>
            <person name="Zwaans B.M."/>
            <person name="Skinner M.E."/>
            <person name="Lombard D.B."/>
            <person name="Zhao Y."/>
        </authorList>
    </citation>
    <scope>ACETYLATION [LARGE SCALE ANALYSIS] AT LYS-124</scope>
    <scope>IDENTIFICATION BY MASS SPECTROMETRY [LARGE SCALE ANALYSIS]</scope>
    <source>
        <tissue>Embryonic fibroblast</tissue>
    </source>
</reference>
<sequence length="152" mass="17208">MANSERTFIAIKPDGVQRGLVGEIIKRFEQKGFRLVGLKFLQASEDLLKEHYTDLKDRPFFTGLVKYMHSGPVVAMVWEGLNVVKTGRVMLGETNPADSKPGTIRGDFCIQVGRNIIHGSDSVKSAEKEISLWFQPEELVEYKSCAQNWIYE</sequence>
<name>NDKA_MOUSE</name>
<proteinExistence type="evidence at protein level"/>
<dbReference type="EC" id="2.7.4.6"/>
<dbReference type="EMBL" id="M35970">
    <property type="protein sequence ID" value="AAA39826.1"/>
    <property type="status" value="ALT_INIT"/>
    <property type="molecule type" value="mRNA"/>
</dbReference>
<dbReference type="EMBL" id="M65037">
    <property type="protein sequence ID" value="AAA63391.1"/>
    <property type="molecule type" value="mRNA"/>
</dbReference>
<dbReference type="EMBL" id="U85511">
    <property type="protein sequence ID" value="AAB42080.1"/>
    <property type="molecule type" value="mRNA"/>
</dbReference>
<dbReference type="EMBL" id="AF033377">
    <property type="protein sequence ID" value="AAB87689.1"/>
    <property type="molecule type" value="mRNA"/>
</dbReference>
<dbReference type="EMBL" id="BC005629">
    <property type="protein sequence ID" value="AAH05629.1"/>
    <property type="molecule type" value="mRNA"/>
</dbReference>
<dbReference type="CCDS" id="CCDS25247.1"/>
<dbReference type="PIR" id="A46557">
    <property type="entry name" value="A46557"/>
</dbReference>
<dbReference type="RefSeq" id="NP_001365783.1">
    <property type="nucleotide sequence ID" value="NM_001378854.1"/>
</dbReference>
<dbReference type="RefSeq" id="NP_032730.1">
    <property type="nucleotide sequence ID" value="NM_008704.3"/>
</dbReference>
<dbReference type="PDB" id="7ZL8">
    <property type="method" value="X-ray"/>
    <property type="resolution" value="1.96 A"/>
    <property type="chains" value="A/B/C/D/E/F/G/H/I/J/K/L=1-152"/>
</dbReference>
<dbReference type="PDB" id="7ZLW">
    <property type="method" value="X-ray"/>
    <property type="resolution" value="2.20 A"/>
    <property type="chains" value="A/B/C/D/E/F=1-152"/>
</dbReference>
<dbReference type="PDB" id="7ZTK">
    <property type="method" value="X-ray"/>
    <property type="resolution" value="2.60 A"/>
    <property type="chains" value="A/B/C/D/E/F=1-152"/>
</dbReference>
<dbReference type="PDBsum" id="7ZL8"/>
<dbReference type="PDBsum" id="7ZLW"/>
<dbReference type="PDBsum" id="7ZTK"/>
<dbReference type="SMR" id="P15532"/>
<dbReference type="BioGRID" id="201788">
    <property type="interactions" value="21"/>
</dbReference>
<dbReference type="DIP" id="DIP-34130N"/>
<dbReference type="FunCoup" id="P15532">
    <property type="interactions" value="1959"/>
</dbReference>
<dbReference type="IntAct" id="P15532">
    <property type="interactions" value="4"/>
</dbReference>
<dbReference type="STRING" id="10090.ENSMUSP00000117022"/>
<dbReference type="GlyGen" id="P15532">
    <property type="glycosylation" value="1 site, 1 O-linked glycan (1 site)"/>
</dbReference>
<dbReference type="iPTMnet" id="P15532"/>
<dbReference type="PhosphoSitePlus" id="P15532"/>
<dbReference type="SwissPalm" id="P15532"/>
<dbReference type="REPRODUCTION-2DPAGE" id="P15532"/>
<dbReference type="jPOST" id="P15532"/>
<dbReference type="PaxDb" id="10090-ENSMUSP00000117022"/>
<dbReference type="PeptideAtlas" id="P15532"/>
<dbReference type="ProteomicsDB" id="252934"/>
<dbReference type="Pumba" id="P15532"/>
<dbReference type="Antibodypedia" id="35046">
    <property type="antibodies" value="1485 antibodies from 43 providers"/>
</dbReference>
<dbReference type="DNASU" id="18102"/>
<dbReference type="Ensembl" id="ENSMUST00000135884.8">
    <property type="protein sequence ID" value="ENSMUSP00000117022.2"/>
    <property type="gene ID" value="ENSMUSG00000037601.12"/>
</dbReference>
<dbReference type="GeneID" id="18102"/>
<dbReference type="KEGG" id="mmu:18102"/>
<dbReference type="UCSC" id="uc007kxu.1">
    <property type="organism name" value="mouse"/>
</dbReference>
<dbReference type="AGR" id="MGI:97355"/>
<dbReference type="CTD" id="4830"/>
<dbReference type="MGI" id="MGI:97355">
    <property type="gene designation" value="Nme1"/>
</dbReference>
<dbReference type="VEuPathDB" id="HostDB:ENSMUSG00000037601"/>
<dbReference type="eggNOG" id="KOG0888">
    <property type="taxonomic scope" value="Eukaryota"/>
</dbReference>
<dbReference type="GeneTree" id="ENSGT00940000162213"/>
<dbReference type="InParanoid" id="P15532"/>
<dbReference type="OMA" id="QHYGEHK"/>
<dbReference type="OrthoDB" id="2162449at2759"/>
<dbReference type="PhylomeDB" id="P15532"/>
<dbReference type="TreeFam" id="TF106373"/>
<dbReference type="Reactome" id="R-MMU-499943">
    <property type="pathway name" value="Interconversion of nucleotide di- and triphosphates"/>
</dbReference>
<dbReference type="Reactome" id="R-MMU-9748787">
    <property type="pathway name" value="Azathioprine ADME"/>
</dbReference>
<dbReference type="Reactome" id="R-MMU-9755088">
    <property type="pathway name" value="Ribavirin ADME"/>
</dbReference>
<dbReference type="BioGRID-ORCS" id="18102">
    <property type="hits" value="3 hits in 81 CRISPR screens"/>
</dbReference>
<dbReference type="CD-CODE" id="CE726F99">
    <property type="entry name" value="Postsynaptic density"/>
</dbReference>
<dbReference type="ChiTaRS" id="Nme1">
    <property type="organism name" value="mouse"/>
</dbReference>
<dbReference type="PRO" id="PR:P15532"/>
<dbReference type="Proteomes" id="UP000000589">
    <property type="component" value="Chromosome 11"/>
</dbReference>
<dbReference type="RNAct" id="P15532">
    <property type="molecule type" value="protein"/>
</dbReference>
<dbReference type="Bgee" id="ENSMUSG00000037601">
    <property type="expression patterns" value="Expressed in right kidney and 175 other cell types or tissues"/>
</dbReference>
<dbReference type="ExpressionAtlas" id="P15532">
    <property type="expression patterns" value="baseline and differential"/>
</dbReference>
<dbReference type="GO" id="GO:0005829">
    <property type="term" value="C:cytosol"/>
    <property type="evidence" value="ECO:0007669"/>
    <property type="project" value="Ensembl"/>
</dbReference>
<dbReference type="GO" id="GO:0005769">
    <property type="term" value="C:early endosome"/>
    <property type="evidence" value="ECO:0007669"/>
    <property type="project" value="Ensembl"/>
</dbReference>
<dbReference type="GO" id="GO:0005739">
    <property type="term" value="C:mitochondrion"/>
    <property type="evidence" value="ECO:0007005"/>
    <property type="project" value="MGI"/>
</dbReference>
<dbReference type="GO" id="GO:0043209">
    <property type="term" value="C:myelin sheath"/>
    <property type="evidence" value="ECO:0007005"/>
    <property type="project" value="UniProtKB"/>
</dbReference>
<dbReference type="GO" id="GO:0005634">
    <property type="term" value="C:nucleus"/>
    <property type="evidence" value="ECO:0007669"/>
    <property type="project" value="UniProtKB-SubCell"/>
</dbReference>
<dbReference type="GO" id="GO:0032587">
    <property type="term" value="C:ruffle membrane"/>
    <property type="evidence" value="ECO:0007669"/>
    <property type="project" value="Ensembl"/>
</dbReference>
<dbReference type="GO" id="GO:0008408">
    <property type="term" value="F:3'-5' exonuclease activity"/>
    <property type="evidence" value="ECO:0007669"/>
    <property type="project" value="Ensembl"/>
</dbReference>
<dbReference type="GO" id="GO:0005524">
    <property type="term" value="F:ATP binding"/>
    <property type="evidence" value="ECO:0007669"/>
    <property type="project" value="UniProtKB-KW"/>
</dbReference>
<dbReference type="GO" id="GO:0004536">
    <property type="term" value="F:DNA nuclease activity"/>
    <property type="evidence" value="ECO:0007669"/>
    <property type="project" value="Ensembl"/>
</dbReference>
<dbReference type="GO" id="GO:0005525">
    <property type="term" value="F:GTP binding"/>
    <property type="evidence" value="ECO:0007669"/>
    <property type="project" value="Ensembl"/>
</dbReference>
<dbReference type="GO" id="GO:0042802">
    <property type="term" value="F:identical protein binding"/>
    <property type="evidence" value="ECO:0007669"/>
    <property type="project" value="Ensembl"/>
</dbReference>
<dbReference type="GO" id="GO:0000287">
    <property type="term" value="F:magnesium ion binding"/>
    <property type="evidence" value="ECO:0007669"/>
    <property type="project" value="Ensembl"/>
</dbReference>
<dbReference type="GO" id="GO:0004550">
    <property type="term" value="F:nucleoside diphosphate kinase activity"/>
    <property type="evidence" value="ECO:0000266"/>
    <property type="project" value="MGI"/>
</dbReference>
<dbReference type="GO" id="GO:0043024">
    <property type="term" value="F:ribosomal small subunit binding"/>
    <property type="evidence" value="ECO:0007669"/>
    <property type="project" value="Ensembl"/>
</dbReference>
<dbReference type="GO" id="GO:0030154">
    <property type="term" value="P:cell differentiation"/>
    <property type="evidence" value="ECO:0007669"/>
    <property type="project" value="UniProtKB-KW"/>
</dbReference>
<dbReference type="GO" id="GO:0006241">
    <property type="term" value="P:CTP biosynthetic process"/>
    <property type="evidence" value="ECO:0007669"/>
    <property type="project" value="InterPro"/>
</dbReference>
<dbReference type="GO" id="GO:0006231">
    <property type="term" value="P:dTMP biosynthetic process"/>
    <property type="evidence" value="ECO:0000303"/>
    <property type="project" value="MGI"/>
</dbReference>
<dbReference type="GO" id="GO:0006897">
    <property type="term" value="P:endocytosis"/>
    <property type="evidence" value="ECO:0007669"/>
    <property type="project" value="UniProtKB-KW"/>
</dbReference>
<dbReference type="GO" id="GO:0006183">
    <property type="term" value="P:GTP biosynthetic process"/>
    <property type="evidence" value="ECO:0007669"/>
    <property type="project" value="InterPro"/>
</dbReference>
<dbReference type="GO" id="GO:0007595">
    <property type="term" value="P:lactation"/>
    <property type="evidence" value="ECO:0000315"/>
    <property type="project" value="MGI"/>
</dbReference>
<dbReference type="GO" id="GO:0030879">
    <property type="term" value="P:mammary gland development"/>
    <property type="evidence" value="ECO:0000315"/>
    <property type="project" value="MGI"/>
</dbReference>
<dbReference type="GO" id="GO:0007399">
    <property type="term" value="P:nervous system development"/>
    <property type="evidence" value="ECO:0007669"/>
    <property type="project" value="UniProtKB-KW"/>
</dbReference>
<dbReference type="GO" id="GO:0050679">
    <property type="term" value="P:positive regulation of epithelial cell proliferation"/>
    <property type="evidence" value="ECO:0007669"/>
    <property type="project" value="Ensembl"/>
</dbReference>
<dbReference type="GO" id="GO:0006228">
    <property type="term" value="P:UTP biosynthetic process"/>
    <property type="evidence" value="ECO:0007669"/>
    <property type="project" value="InterPro"/>
</dbReference>
<dbReference type="CDD" id="cd04413">
    <property type="entry name" value="NDPk_I"/>
    <property type="match status" value="1"/>
</dbReference>
<dbReference type="FunFam" id="3.30.70.141:FF:000039">
    <property type="entry name" value="Nucleoside diphosphate kinase B"/>
    <property type="match status" value="1"/>
</dbReference>
<dbReference type="Gene3D" id="3.30.70.141">
    <property type="entry name" value="Nucleoside diphosphate kinase-like domain"/>
    <property type="match status" value="1"/>
</dbReference>
<dbReference type="HAMAP" id="MF_00451">
    <property type="entry name" value="NDP_kinase"/>
    <property type="match status" value="1"/>
</dbReference>
<dbReference type="InterPro" id="IPR034907">
    <property type="entry name" value="NDK-like_dom"/>
</dbReference>
<dbReference type="InterPro" id="IPR036850">
    <property type="entry name" value="NDK-like_dom_sf"/>
</dbReference>
<dbReference type="InterPro" id="IPR001564">
    <property type="entry name" value="Nucleoside_diP_kinase"/>
</dbReference>
<dbReference type="InterPro" id="IPR023005">
    <property type="entry name" value="Nucleoside_diP_kinase_AS"/>
</dbReference>
<dbReference type="NCBIfam" id="NF001908">
    <property type="entry name" value="PRK00668.1"/>
    <property type="match status" value="1"/>
</dbReference>
<dbReference type="PANTHER" id="PTHR11349">
    <property type="entry name" value="NUCLEOSIDE DIPHOSPHATE KINASE"/>
    <property type="match status" value="1"/>
</dbReference>
<dbReference type="Pfam" id="PF00334">
    <property type="entry name" value="NDK"/>
    <property type="match status" value="1"/>
</dbReference>
<dbReference type="PRINTS" id="PR01243">
    <property type="entry name" value="NUCDPKINASE"/>
</dbReference>
<dbReference type="SMART" id="SM00562">
    <property type="entry name" value="NDK"/>
    <property type="match status" value="1"/>
</dbReference>
<dbReference type="SUPFAM" id="SSF54919">
    <property type="entry name" value="Nucleoside diphosphate kinase, NDK"/>
    <property type="match status" value="1"/>
</dbReference>
<dbReference type="PROSITE" id="PS00469">
    <property type="entry name" value="NDPK"/>
    <property type="match status" value="1"/>
</dbReference>
<dbReference type="PROSITE" id="PS51374">
    <property type="entry name" value="NDPK_LIKE"/>
    <property type="match status" value="1"/>
</dbReference>
<gene>
    <name type="primary">Nme1</name>
    <name type="synonym">Nm23</name>
</gene>
<keyword id="KW-0002">3D-structure</keyword>
<keyword id="KW-0007">Acetylation</keyword>
<keyword id="KW-0067">ATP-binding</keyword>
<keyword id="KW-0963">Cytoplasm</keyword>
<keyword id="KW-0221">Differentiation</keyword>
<keyword id="KW-0903">Direct protein sequencing</keyword>
<keyword id="KW-0254">Endocytosis</keyword>
<keyword id="KW-1017">Isopeptide bond</keyword>
<keyword id="KW-0418">Kinase</keyword>
<keyword id="KW-0460">Magnesium</keyword>
<keyword id="KW-0479">Metal-binding</keyword>
<keyword id="KW-0524">Neurogenesis</keyword>
<keyword id="KW-0546">Nucleotide metabolism</keyword>
<keyword id="KW-0547">Nucleotide-binding</keyword>
<keyword id="KW-0539">Nucleus</keyword>
<keyword id="KW-0597">Phosphoprotein</keyword>
<keyword id="KW-1185">Reference proteome</keyword>
<keyword id="KW-0808">Transferase</keyword>
<keyword id="KW-0832">Ubl conjugation</keyword>
<accession>P15532</accession>
<protein>
    <recommendedName>
        <fullName>Nucleoside diphosphate kinase A</fullName>
        <shortName>NDK A</shortName>
        <shortName>NDP kinase A</shortName>
        <ecNumber>2.7.4.6</ecNumber>
    </recommendedName>
    <alternativeName>
        <fullName>Metastasis inhibition factor NM23</fullName>
    </alternativeName>
    <alternativeName>
        <fullName>NDPK-A</fullName>
    </alternativeName>
    <alternativeName>
        <fullName>Tumor metastatic process-associated protein</fullName>
    </alternativeName>
    <alternativeName>
        <fullName>nm23-M1</fullName>
    </alternativeName>
</protein>
<feature type="chain" id="PRO_0000137115" description="Nucleoside diphosphate kinase A">
    <location>
        <begin position="1"/>
        <end position="152"/>
    </location>
</feature>
<feature type="active site" description="Pros-phosphohistidine intermediate">
    <location>
        <position position="118"/>
    </location>
</feature>
<feature type="binding site" evidence="1">
    <location>
        <position position="12"/>
    </location>
    <ligand>
        <name>ATP</name>
        <dbReference type="ChEBI" id="CHEBI:30616"/>
    </ligand>
</feature>
<feature type="binding site" evidence="1">
    <location>
        <position position="60"/>
    </location>
    <ligand>
        <name>ATP</name>
        <dbReference type="ChEBI" id="CHEBI:30616"/>
    </ligand>
</feature>
<feature type="binding site" evidence="1">
    <location>
        <position position="88"/>
    </location>
    <ligand>
        <name>ATP</name>
        <dbReference type="ChEBI" id="CHEBI:30616"/>
    </ligand>
</feature>
<feature type="binding site" evidence="1">
    <location>
        <position position="94"/>
    </location>
    <ligand>
        <name>ATP</name>
        <dbReference type="ChEBI" id="CHEBI:30616"/>
    </ligand>
</feature>
<feature type="binding site" evidence="1">
    <location>
        <position position="105"/>
    </location>
    <ligand>
        <name>ATP</name>
        <dbReference type="ChEBI" id="CHEBI:30616"/>
    </ligand>
</feature>
<feature type="binding site" evidence="1">
    <location>
        <position position="115"/>
    </location>
    <ligand>
        <name>ATP</name>
        <dbReference type="ChEBI" id="CHEBI:30616"/>
    </ligand>
</feature>
<feature type="modified residue" description="Phosphoserine" evidence="2">
    <location>
        <position position="120"/>
    </location>
</feature>
<feature type="modified residue" description="Phosphoserine" evidence="2">
    <location>
        <position position="122"/>
    </location>
</feature>
<feature type="modified residue" description="N6-acetyllysine" evidence="4">
    <location>
        <position position="124"/>
    </location>
</feature>
<feature type="modified residue" description="Phosphoserine" evidence="2">
    <location>
        <position position="125"/>
    </location>
</feature>
<feature type="cross-link" description="Glycyl lysine isopeptide (Lys-Gly) (interchain with G-Cter in ubiquitin)" evidence="2">
    <location>
        <position position="100"/>
    </location>
</feature>
<feature type="helix" evidence="5">
    <location>
        <begin position="2"/>
        <end position="4"/>
    </location>
</feature>
<feature type="strand" evidence="5">
    <location>
        <begin position="6"/>
        <end position="11"/>
    </location>
</feature>
<feature type="helix" evidence="5">
    <location>
        <begin position="13"/>
        <end position="17"/>
    </location>
</feature>
<feature type="helix" evidence="5">
    <location>
        <begin position="21"/>
        <end position="31"/>
    </location>
</feature>
<feature type="strand" evidence="5">
    <location>
        <begin position="34"/>
        <end position="41"/>
    </location>
</feature>
<feature type="helix" evidence="5">
    <location>
        <begin position="45"/>
        <end position="51"/>
    </location>
</feature>
<feature type="helix" evidence="5">
    <location>
        <begin position="53"/>
        <end position="55"/>
    </location>
</feature>
<feature type="helix" evidence="5">
    <location>
        <begin position="61"/>
        <end position="68"/>
    </location>
</feature>
<feature type="strand" evidence="5">
    <location>
        <begin position="73"/>
        <end position="80"/>
    </location>
</feature>
<feature type="helix" evidence="5">
    <location>
        <begin position="83"/>
        <end position="91"/>
    </location>
</feature>
<feature type="helix" evidence="5">
    <location>
        <begin position="96"/>
        <end position="98"/>
    </location>
</feature>
<feature type="helix" evidence="5">
    <location>
        <begin position="104"/>
        <end position="108"/>
    </location>
</feature>
<feature type="helix" evidence="5">
    <location>
        <begin position="112"/>
        <end position="114"/>
    </location>
</feature>
<feature type="strand" evidence="5">
    <location>
        <begin position="117"/>
        <end position="119"/>
    </location>
</feature>
<feature type="helix" evidence="5">
    <location>
        <begin position="123"/>
        <end position="133"/>
    </location>
</feature>
<feature type="helix" evidence="5">
    <location>
        <begin position="136"/>
        <end position="138"/>
    </location>
</feature>
<feature type="helix" evidence="5">
    <location>
        <begin position="147"/>
        <end position="150"/>
    </location>
</feature>